<evidence type="ECO:0000255" key="1"/>
<evidence type="ECO:0000269" key="2">
    <source>
    </source>
</evidence>
<evidence type="ECO:0000305" key="3"/>
<accession>Q9QY33</accession>
<accession>Q9EQG4</accession>
<name>TSN3_MOUSE</name>
<organism>
    <name type="scientific">Mus musculus</name>
    <name type="common">Mouse</name>
    <dbReference type="NCBI Taxonomy" id="10090"/>
    <lineage>
        <taxon>Eukaryota</taxon>
        <taxon>Metazoa</taxon>
        <taxon>Chordata</taxon>
        <taxon>Craniata</taxon>
        <taxon>Vertebrata</taxon>
        <taxon>Euteleostomi</taxon>
        <taxon>Mammalia</taxon>
        <taxon>Eutheria</taxon>
        <taxon>Euarchontoglires</taxon>
        <taxon>Glires</taxon>
        <taxon>Rodentia</taxon>
        <taxon>Myomorpha</taxon>
        <taxon>Muroidea</taxon>
        <taxon>Muridae</taxon>
        <taxon>Murinae</taxon>
        <taxon>Mus</taxon>
        <taxon>Mus</taxon>
    </lineage>
</organism>
<protein>
    <recommendedName>
        <fullName>Tetraspanin-3</fullName>
        <shortName>Tspan-3</shortName>
    </recommendedName>
    <alternativeName>
        <fullName>OSP-associated protein 1</fullName>
        <shortName>OAP-1</shortName>
    </alternativeName>
    <alternativeName>
        <fullName>Tetraspanin TM4-A</fullName>
    </alternativeName>
    <alternativeName>
        <fullName>Transmembrane 4 superfamily member 8</fullName>
    </alternativeName>
</protein>
<keyword id="KW-0325">Glycoprotein</keyword>
<keyword id="KW-0472">Membrane</keyword>
<keyword id="KW-1185">Reference proteome</keyword>
<keyword id="KW-0812">Transmembrane</keyword>
<keyword id="KW-1133">Transmembrane helix</keyword>
<dbReference type="EMBL" id="AF133427">
    <property type="protein sequence ID" value="AAF15362.1"/>
    <property type="molecule type" value="mRNA"/>
</dbReference>
<dbReference type="EMBL" id="AF242591">
    <property type="protein sequence ID" value="AAG49145.1"/>
    <property type="molecule type" value="mRNA"/>
</dbReference>
<dbReference type="CCDS" id="CCDS23207.1"/>
<dbReference type="RefSeq" id="NP_062767.3">
    <property type="nucleotide sequence ID" value="NM_019793.3"/>
</dbReference>
<dbReference type="SMR" id="Q9QY33"/>
<dbReference type="CORUM" id="Q9QY33"/>
<dbReference type="FunCoup" id="Q9QY33">
    <property type="interactions" value="453"/>
</dbReference>
<dbReference type="STRING" id="10090.ENSMUSP00000034876"/>
<dbReference type="GlyConnect" id="2761">
    <property type="glycosylation" value="13 N-Linked glycans (1 site)"/>
</dbReference>
<dbReference type="GlyCosmos" id="Q9QY33">
    <property type="glycosylation" value="4 sites, 13 glycans"/>
</dbReference>
<dbReference type="GlyGen" id="Q9QY33">
    <property type="glycosylation" value="4 sites, 13 N-linked glycans (3 sites)"/>
</dbReference>
<dbReference type="iPTMnet" id="Q9QY33"/>
<dbReference type="PhosphoSitePlus" id="Q9QY33"/>
<dbReference type="SwissPalm" id="Q9QY33"/>
<dbReference type="PaxDb" id="10090-ENSMUSP00000034876"/>
<dbReference type="ProteomicsDB" id="297665"/>
<dbReference type="Pumba" id="Q9QY33"/>
<dbReference type="Antibodypedia" id="3085">
    <property type="antibodies" value="158 antibodies from 20 providers"/>
</dbReference>
<dbReference type="DNASU" id="56434"/>
<dbReference type="Ensembl" id="ENSMUST00000034876.10">
    <property type="protein sequence ID" value="ENSMUSP00000034876.9"/>
    <property type="gene ID" value="ENSMUSG00000032324.12"/>
</dbReference>
<dbReference type="GeneID" id="56434"/>
<dbReference type="KEGG" id="mmu:56434"/>
<dbReference type="UCSC" id="uc009psx.2">
    <property type="organism name" value="mouse"/>
</dbReference>
<dbReference type="AGR" id="MGI:1928098"/>
<dbReference type="CTD" id="10099"/>
<dbReference type="MGI" id="MGI:1928098">
    <property type="gene designation" value="Tspan3"/>
</dbReference>
<dbReference type="VEuPathDB" id="HostDB:ENSMUSG00000032324"/>
<dbReference type="eggNOG" id="KOG3882">
    <property type="taxonomic scope" value="Eukaryota"/>
</dbReference>
<dbReference type="GeneTree" id="ENSGT00940000154954"/>
<dbReference type="HOGENOM" id="CLU_055524_5_2_1"/>
<dbReference type="InParanoid" id="Q9QY33"/>
<dbReference type="OMA" id="ACKENKC"/>
<dbReference type="OrthoDB" id="10016273at2759"/>
<dbReference type="PhylomeDB" id="Q9QY33"/>
<dbReference type="TreeFam" id="TF316345"/>
<dbReference type="BioGRID-ORCS" id="56434">
    <property type="hits" value="1 hit in 78 CRISPR screens"/>
</dbReference>
<dbReference type="ChiTaRS" id="Tspan3">
    <property type="organism name" value="mouse"/>
</dbReference>
<dbReference type="PRO" id="PR:Q9QY33"/>
<dbReference type="Proteomes" id="UP000000589">
    <property type="component" value="Chromosome 9"/>
</dbReference>
<dbReference type="RNAct" id="Q9QY33">
    <property type="molecule type" value="protein"/>
</dbReference>
<dbReference type="Bgee" id="ENSMUSG00000032324">
    <property type="expression patterns" value="Expressed in vestibular epithelium and 256 other cell types or tissues"/>
</dbReference>
<dbReference type="ExpressionAtlas" id="Q9QY33">
    <property type="expression patterns" value="baseline and differential"/>
</dbReference>
<dbReference type="GO" id="GO:0016020">
    <property type="term" value="C:membrane"/>
    <property type="evidence" value="ECO:0007669"/>
    <property type="project" value="UniProtKB-SubCell"/>
</dbReference>
<dbReference type="CDD" id="cd03163">
    <property type="entry name" value="TM4SF8_like_LEL"/>
    <property type="match status" value="1"/>
</dbReference>
<dbReference type="FunFam" id="1.10.1450.10:FF:000004">
    <property type="entry name" value="Tetraspanin"/>
    <property type="match status" value="1"/>
</dbReference>
<dbReference type="Gene3D" id="1.10.1450.10">
    <property type="entry name" value="Tetraspanin"/>
    <property type="match status" value="1"/>
</dbReference>
<dbReference type="InterPro" id="IPR018499">
    <property type="entry name" value="Tetraspanin/Peripherin"/>
</dbReference>
<dbReference type="InterPro" id="IPR000301">
    <property type="entry name" value="Tetraspanin_animals"/>
</dbReference>
<dbReference type="InterPro" id="IPR018503">
    <property type="entry name" value="Tetraspanin_CS"/>
</dbReference>
<dbReference type="InterPro" id="IPR008952">
    <property type="entry name" value="Tetraspanin_EC2_sf"/>
</dbReference>
<dbReference type="PANTHER" id="PTHR19282">
    <property type="entry name" value="TETRASPANIN"/>
    <property type="match status" value="1"/>
</dbReference>
<dbReference type="PANTHER" id="PTHR19282:SF48">
    <property type="entry name" value="TETRASPANIN-3"/>
    <property type="match status" value="1"/>
</dbReference>
<dbReference type="Pfam" id="PF00335">
    <property type="entry name" value="Tetraspanin"/>
    <property type="match status" value="1"/>
</dbReference>
<dbReference type="PIRSF" id="PIRSF002419">
    <property type="entry name" value="Tetraspanin"/>
    <property type="match status" value="1"/>
</dbReference>
<dbReference type="PRINTS" id="PR00259">
    <property type="entry name" value="TMFOUR"/>
</dbReference>
<dbReference type="SUPFAM" id="SSF48652">
    <property type="entry name" value="Tetraspanin"/>
    <property type="match status" value="1"/>
</dbReference>
<dbReference type="PROSITE" id="PS00421">
    <property type="entry name" value="TM4_1"/>
    <property type="match status" value="1"/>
</dbReference>
<feature type="chain" id="PRO_0000219240" description="Tetraspanin-3">
    <location>
        <begin position="1"/>
        <end position="253"/>
    </location>
</feature>
<feature type="topological domain" description="Cytoplasmic" evidence="1">
    <location>
        <begin position="1"/>
        <end position="11"/>
    </location>
</feature>
<feature type="transmembrane region" description="Helical" evidence="1">
    <location>
        <begin position="12"/>
        <end position="32"/>
    </location>
</feature>
<feature type="topological domain" description="Extracellular" evidence="1">
    <location>
        <begin position="33"/>
        <end position="50"/>
    </location>
</feature>
<feature type="transmembrane region" description="Helical" evidence="1">
    <location>
        <begin position="51"/>
        <end position="71"/>
    </location>
</feature>
<feature type="topological domain" description="Cytoplasmic" evidence="1">
    <location>
        <begin position="72"/>
        <end position="85"/>
    </location>
</feature>
<feature type="transmembrane region" description="Helical" evidence="1">
    <location>
        <begin position="86"/>
        <end position="106"/>
    </location>
</feature>
<feature type="topological domain" description="Extracellular" evidence="1">
    <location>
        <begin position="107"/>
        <end position="212"/>
    </location>
</feature>
<feature type="transmembrane region" description="Helical" evidence="1">
    <location>
        <begin position="213"/>
        <end position="233"/>
    </location>
</feature>
<feature type="topological domain" description="Cytoplasmic" evidence="1">
    <location>
        <begin position="234"/>
        <end position="253"/>
    </location>
</feature>
<feature type="glycosylation site" description="N-linked (GlcNAc...) asparagine" evidence="1">
    <location>
        <position position="127"/>
    </location>
</feature>
<feature type="glycosylation site" description="N-linked (GlcNAc...) asparagine" evidence="1">
    <location>
        <position position="152"/>
    </location>
</feature>
<feature type="glycosylation site" description="N-linked (GlcNAc...) asparagine" evidence="1">
    <location>
        <position position="167"/>
    </location>
</feature>
<feature type="glycosylation site" description="N-linked (GlcNAc...) asparagine" evidence="1">
    <location>
        <position position="183"/>
    </location>
</feature>
<feature type="sequence conflict" description="In Ref. 2; AAG49145." evidence="3" ref="2">
    <original>A</original>
    <variation>R</variation>
    <location>
        <position position="220"/>
    </location>
</feature>
<feature type="sequence conflict" description="In Ref. 2; AAG49145." evidence="3" ref="2">
    <original>G</original>
    <variation>A</variation>
    <location>
        <position position="226"/>
    </location>
</feature>
<proteinExistence type="evidence at protein level"/>
<reference key="1">
    <citation type="journal article" date="2000" name="DNA Seq.">
        <title>The molecular characterisation of mouse tspan-3.</title>
        <authorList>
            <person name="Puls K.L."/>
            <person name="Wright M.D."/>
        </authorList>
    </citation>
    <scope>NUCLEOTIDE SEQUENCE [MRNA]</scope>
    <source>
        <tissue>Spleen</tissue>
    </source>
</reference>
<reference key="2">
    <citation type="journal article" date="2001" name="J. Cell Biol.">
        <title>OSP/claudin-11 forms a complex with a novel member of the tetraspanin super family and beta1 integrin and regulates proliferation and migration of oligodendrocytes.</title>
        <authorList>
            <person name="Tiwari-Woodruff S.K."/>
            <person name="Buznikov A.G."/>
            <person name="Vu T.Q."/>
            <person name="Micevych P.E."/>
            <person name="Chen K."/>
            <person name="Kornblum H.I."/>
            <person name="Bronstein J.M."/>
        </authorList>
    </citation>
    <scope>NUCLEOTIDE SEQUENCE [MRNA]</scope>
    <scope>INTERACTION WITH CLDN11</scope>
    <source>
        <strain>C57BL/6J</strain>
    </source>
</reference>
<sequence>MGQCGITSSKTVLVFLNLIFWGAAGILCYVGAYVFITYDDYDHFFEDVYTLFPAVVIIAVGALLFIIGLIGCCATIRESRCGLATFVFILLLVFVTEVVVVVLGYVYRAKVENEVDRSIQKVYKTYNGTNSDAASRAIDYVQRQLHCCGIHNYSDWENTDWFKETKNQSVPLSCCRETAKSCNGSLANPSDLYAEGCEALVVKKLQEILMHVIWAALAFAAIQLLGMLCACIVLCRRSRDPAYELLITGGTYA</sequence>
<comment type="function">
    <text>Regulates the proliferation and migration of oligodendrocytes, a process essential for normal myelination and repair.</text>
</comment>
<comment type="subunit">
    <text evidence="2">Interacts with claudin-11/CLDN11 and integrins.</text>
</comment>
<comment type="subcellular location">
    <subcellularLocation>
        <location evidence="3">Membrane</location>
        <topology evidence="3">Multi-pass membrane protein</topology>
    </subcellularLocation>
</comment>
<comment type="similarity">
    <text evidence="3">Belongs to the tetraspanin (TM4SF) family.</text>
</comment>
<gene>
    <name type="primary">Tspan3</name>
    <name type="synonym">Tm4sf8</name>
</gene>